<feature type="chain" id="PRO_0000328423" description="General transcription factor IIH subunit 5">
    <location>
        <begin position="1"/>
        <end position="72"/>
    </location>
</feature>
<keyword id="KW-0227">DNA damage</keyword>
<keyword id="KW-0234">DNA repair</keyword>
<keyword id="KW-0539">Nucleus</keyword>
<keyword id="KW-1185">Reference proteome</keyword>
<keyword id="KW-0804">Transcription</keyword>
<keyword id="KW-0805">Transcription regulation</keyword>
<comment type="function">
    <text evidence="2">Component of the general transcription and DNA repair factor IIH (TFIIH) core complex, which is involved in general and transcription-coupled nucleotide excision repair (NER) of damaged DNA and, when complexed to CAK, in RNA transcription by RNA polymerase II. In NER, TFIIH acts by opening DNA around the lesion to allow the excision of the damaged oligonucleotide and its replacement by a new DNA fragment. In transcription, TFIIH has an essential role in transcription initiation. When the pre-initiation complex (PIC) has been established, TFIIH is required for promoter opening and promoter escape. Phosphorylation of the C-terminal tail (CTD) of the largest subunit of RNA polymerase II by the kinase module CAK controls the initiation of transcription.</text>
</comment>
<comment type="subunit">
    <text evidence="2">Component of the 7-subunit TFIIH core complex composed of XPB/repB, XPD/repD, gtf2h1, gtf2h2, gtf2h3, gtf2h4 and gtf2h5, which is active in NER. The core complex associates with the 3-subunit CDK-activating kinase (CAK) module composed of cycH/cyclin H, cdk7 and mnat1 to form the 10-subunit holoenzyme (holo-TFIIH) active in transcription.</text>
</comment>
<comment type="subcellular location">
    <subcellularLocation>
        <location evidence="1">Nucleus</location>
    </subcellularLocation>
</comment>
<comment type="similarity">
    <text evidence="3">Belongs to the TFB5 family.</text>
</comment>
<protein>
    <recommendedName>
        <fullName>General transcription factor IIH subunit 5</fullName>
    </recommendedName>
    <alternativeName>
        <fullName>TFIIH basal transcription factor complex subunit 5</fullName>
    </alternativeName>
</protein>
<gene>
    <name type="primary">gtf2h5</name>
    <name type="synonym">tfiih5</name>
    <name type="ORF">DDB_G0269906</name>
</gene>
<reference key="1">
    <citation type="journal article" date="2005" name="Nature">
        <title>The genome of the social amoeba Dictyostelium discoideum.</title>
        <authorList>
            <person name="Eichinger L."/>
            <person name="Pachebat J.A."/>
            <person name="Gloeckner G."/>
            <person name="Rajandream M.A."/>
            <person name="Sucgang R."/>
            <person name="Berriman M."/>
            <person name="Song J."/>
            <person name="Olsen R."/>
            <person name="Szafranski K."/>
            <person name="Xu Q."/>
            <person name="Tunggal B."/>
            <person name="Kummerfeld S."/>
            <person name="Madera M."/>
            <person name="Konfortov B.A."/>
            <person name="Rivero F."/>
            <person name="Bankier A.T."/>
            <person name="Lehmann R."/>
            <person name="Hamlin N."/>
            <person name="Davies R."/>
            <person name="Gaudet P."/>
            <person name="Fey P."/>
            <person name="Pilcher K."/>
            <person name="Chen G."/>
            <person name="Saunders D."/>
            <person name="Sodergren E.J."/>
            <person name="Davis P."/>
            <person name="Kerhornou A."/>
            <person name="Nie X."/>
            <person name="Hall N."/>
            <person name="Anjard C."/>
            <person name="Hemphill L."/>
            <person name="Bason N."/>
            <person name="Farbrother P."/>
            <person name="Desany B."/>
            <person name="Just E."/>
            <person name="Morio T."/>
            <person name="Rost R."/>
            <person name="Churcher C.M."/>
            <person name="Cooper J."/>
            <person name="Haydock S."/>
            <person name="van Driessche N."/>
            <person name="Cronin A."/>
            <person name="Goodhead I."/>
            <person name="Muzny D.M."/>
            <person name="Mourier T."/>
            <person name="Pain A."/>
            <person name="Lu M."/>
            <person name="Harper D."/>
            <person name="Lindsay R."/>
            <person name="Hauser H."/>
            <person name="James K.D."/>
            <person name="Quiles M."/>
            <person name="Madan Babu M."/>
            <person name="Saito T."/>
            <person name="Buchrieser C."/>
            <person name="Wardroper A."/>
            <person name="Felder M."/>
            <person name="Thangavelu M."/>
            <person name="Johnson D."/>
            <person name="Knights A."/>
            <person name="Loulseged H."/>
            <person name="Mungall K.L."/>
            <person name="Oliver K."/>
            <person name="Price C."/>
            <person name="Quail M.A."/>
            <person name="Urushihara H."/>
            <person name="Hernandez J."/>
            <person name="Rabbinowitsch E."/>
            <person name="Steffen D."/>
            <person name="Sanders M."/>
            <person name="Ma J."/>
            <person name="Kohara Y."/>
            <person name="Sharp S."/>
            <person name="Simmonds M.N."/>
            <person name="Spiegler S."/>
            <person name="Tivey A."/>
            <person name="Sugano S."/>
            <person name="White B."/>
            <person name="Walker D."/>
            <person name="Woodward J.R."/>
            <person name="Winckler T."/>
            <person name="Tanaka Y."/>
            <person name="Shaulsky G."/>
            <person name="Schleicher M."/>
            <person name="Weinstock G.M."/>
            <person name="Rosenthal A."/>
            <person name="Cox E.C."/>
            <person name="Chisholm R.L."/>
            <person name="Gibbs R.A."/>
            <person name="Loomis W.F."/>
            <person name="Platzer M."/>
            <person name="Kay R.R."/>
            <person name="Williams J.G."/>
            <person name="Dear P.H."/>
            <person name="Noegel A.A."/>
            <person name="Barrell B.G."/>
            <person name="Kuspa A."/>
        </authorList>
    </citation>
    <scope>NUCLEOTIDE SEQUENCE [LARGE SCALE GENOMIC DNA]</scope>
    <source>
        <strain>AX4</strain>
    </source>
</reference>
<organism>
    <name type="scientific">Dictyostelium discoideum</name>
    <name type="common">Social amoeba</name>
    <dbReference type="NCBI Taxonomy" id="44689"/>
    <lineage>
        <taxon>Eukaryota</taxon>
        <taxon>Amoebozoa</taxon>
        <taxon>Evosea</taxon>
        <taxon>Eumycetozoa</taxon>
        <taxon>Dictyostelia</taxon>
        <taxon>Dictyosteliales</taxon>
        <taxon>Dictyosteliaceae</taxon>
        <taxon>Dictyostelium</taxon>
    </lineage>
</organism>
<accession>Q55CT8</accession>
<proteinExistence type="inferred from homology"/>
<evidence type="ECO:0000250" key="1"/>
<evidence type="ECO:0000250" key="2">
    <source>
        <dbReference type="UniProtKB" id="Q6ZYL4"/>
    </source>
</evidence>
<evidence type="ECO:0000305" key="3"/>
<sequence length="72" mass="8531">MVHVYKGLFLECDPPTKQFVEYISKQEHFEVIVLDETHLFLQGGDEKVINSIQRRIDDLQNQNTYSVFDKDQ</sequence>
<name>TF2H5_DICDI</name>
<dbReference type="EMBL" id="AAFI02000005">
    <property type="protein sequence ID" value="EAL72303.1"/>
    <property type="molecule type" value="Genomic_DNA"/>
</dbReference>
<dbReference type="RefSeq" id="XP_646393.1">
    <property type="nucleotide sequence ID" value="XM_641301.1"/>
</dbReference>
<dbReference type="SMR" id="Q55CT8"/>
<dbReference type="FunCoup" id="Q55CT8">
    <property type="interactions" value="18"/>
</dbReference>
<dbReference type="STRING" id="44689.Q55CT8"/>
<dbReference type="PaxDb" id="44689-DDB0266451"/>
<dbReference type="EnsemblProtists" id="EAL72303">
    <property type="protein sequence ID" value="EAL72303"/>
    <property type="gene ID" value="DDB_G0269906"/>
</dbReference>
<dbReference type="GeneID" id="8617348"/>
<dbReference type="KEGG" id="ddi:DDB_G0269906"/>
<dbReference type="dictyBase" id="DDB_G0269906">
    <property type="gene designation" value="gtf2h5"/>
</dbReference>
<dbReference type="VEuPathDB" id="AmoebaDB:DDB_G0269906"/>
<dbReference type="eggNOG" id="ENOG502RHXG">
    <property type="taxonomic scope" value="Eukaryota"/>
</dbReference>
<dbReference type="HOGENOM" id="CLU_166246_4_1_1"/>
<dbReference type="InParanoid" id="Q55CT8"/>
<dbReference type="OMA" id="DPPTKQF"/>
<dbReference type="PhylomeDB" id="Q55CT8"/>
<dbReference type="Reactome" id="R-DDI-113418">
    <property type="pathway name" value="Formation of the Early Elongation Complex"/>
</dbReference>
<dbReference type="Reactome" id="R-DDI-5696395">
    <property type="pathway name" value="Formation of Incision Complex in GG-NER"/>
</dbReference>
<dbReference type="Reactome" id="R-DDI-674695">
    <property type="pathway name" value="RNA Polymerase II Pre-transcription Events"/>
</dbReference>
<dbReference type="Reactome" id="R-DDI-6781823">
    <property type="pathway name" value="Formation of TC-NER Pre-Incision Complex"/>
</dbReference>
<dbReference type="Reactome" id="R-DDI-6782135">
    <property type="pathway name" value="Dual incision in TC-NER"/>
</dbReference>
<dbReference type="Reactome" id="R-DDI-6782210">
    <property type="pathway name" value="Gap-filling DNA repair synthesis and ligation in TC-NER"/>
</dbReference>
<dbReference type="Reactome" id="R-DDI-6796648">
    <property type="pathway name" value="TP53 Regulates Transcription of DNA Repair Genes"/>
</dbReference>
<dbReference type="Reactome" id="R-DDI-72086">
    <property type="pathway name" value="mRNA Capping"/>
</dbReference>
<dbReference type="Reactome" id="R-DDI-73772">
    <property type="pathway name" value="RNA Polymerase I Promoter Escape"/>
</dbReference>
<dbReference type="Reactome" id="R-DDI-73776">
    <property type="pathway name" value="RNA Polymerase II Promoter Escape"/>
</dbReference>
<dbReference type="Reactome" id="R-DDI-73779">
    <property type="pathway name" value="RNA Polymerase II Transcription Pre-Initiation And Promoter Opening"/>
</dbReference>
<dbReference type="Reactome" id="R-DDI-75953">
    <property type="pathway name" value="RNA Polymerase II Transcription Initiation"/>
</dbReference>
<dbReference type="Reactome" id="R-DDI-76042">
    <property type="pathway name" value="RNA Polymerase II Transcription Initiation And Promoter Clearance"/>
</dbReference>
<dbReference type="Reactome" id="R-DDI-77075">
    <property type="pathway name" value="RNA Pol II CTD phosphorylation and interaction with CE"/>
</dbReference>
<dbReference type="PRO" id="PR:Q55CT8"/>
<dbReference type="Proteomes" id="UP000002195">
    <property type="component" value="Chromosome 1"/>
</dbReference>
<dbReference type="GO" id="GO:0000439">
    <property type="term" value="C:transcription factor TFIIH core complex"/>
    <property type="evidence" value="ECO:0000318"/>
    <property type="project" value="GO_Central"/>
</dbReference>
<dbReference type="GO" id="GO:0005675">
    <property type="term" value="C:transcription factor TFIIH holo complex"/>
    <property type="evidence" value="ECO:0000318"/>
    <property type="project" value="GO_Central"/>
</dbReference>
<dbReference type="GO" id="GO:0006294">
    <property type="term" value="P:nucleotide-excision repair, preincision complex assembly"/>
    <property type="evidence" value="ECO:0000318"/>
    <property type="project" value="GO_Central"/>
</dbReference>
<dbReference type="GO" id="GO:0006366">
    <property type="term" value="P:transcription by RNA polymerase II"/>
    <property type="evidence" value="ECO:0000318"/>
    <property type="project" value="GO_Central"/>
</dbReference>
<dbReference type="GO" id="GO:0006367">
    <property type="term" value="P:transcription initiation at RNA polymerase II promoter"/>
    <property type="evidence" value="ECO:0007669"/>
    <property type="project" value="InterPro"/>
</dbReference>
<dbReference type="Gene3D" id="3.30.70.1220">
    <property type="entry name" value="TFB5-like"/>
    <property type="match status" value="1"/>
</dbReference>
<dbReference type="InterPro" id="IPR035935">
    <property type="entry name" value="TFB5-like_sf"/>
</dbReference>
<dbReference type="InterPro" id="IPR009400">
    <property type="entry name" value="TFIIH_TTDA/Tfb5"/>
</dbReference>
<dbReference type="PANTHER" id="PTHR28580">
    <property type="entry name" value="GENERAL TRANSCRIPTION FACTOR IIH SUBUNIT 5"/>
    <property type="match status" value="1"/>
</dbReference>
<dbReference type="PANTHER" id="PTHR28580:SF1">
    <property type="entry name" value="GENERAL TRANSCRIPTION FACTOR IIH SUBUNIT 5"/>
    <property type="match status" value="1"/>
</dbReference>
<dbReference type="Pfam" id="PF06331">
    <property type="entry name" value="Tfb5"/>
    <property type="match status" value="1"/>
</dbReference>
<dbReference type="SMART" id="SM01395">
    <property type="entry name" value="Tbf5"/>
    <property type="match status" value="1"/>
</dbReference>
<dbReference type="SUPFAM" id="SSF142897">
    <property type="entry name" value="TFB5-like"/>
    <property type="match status" value="1"/>
</dbReference>